<sequence length="233" mass="25953">MLIPIPALNDNYIWVYKRENLSVIVIDIPEIAALSQFIQAQNLVIGALLITHNHRDHIGALAEFKQFYPHVHIYGPAECADQGVTQVIDAGRLIIDEYHIDVLPTGGHTAQHLSFLVDGHLFCGDTLFSAGCGRVFTGDYSQMFTSLQLLKSLPDETIVCPAHEYTLGNLAFALTTGKNKSAVQKQLEKVKKLRAENNPSLPTTLALEKQINPFLQVEGLEEFIELRKAKDMF</sequence>
<evidence type="ECO:0000255" key="1">
    <source>
        <dbReference type="HAMAP-Rule" id="MF_01374"/>
    </source>
</evidence>
<name>GLO2_HISS2</name>
<dbReference type="EC" id="3.1.2.6" evidence="1"/>
<dbReference type="EMBL" id="CP000947">
    <property type="protein sequence ID" value="ACA31007.1"/>
    <property type="molecule type" value="Genomic_DNA"/>
</dbReference>
<dbReference type="RefSeq" id="WP_012340437.1">
    <property type="nucleotide sequence ID" value="NC_010519.1"/>
</dbReference>
<dbReference type="SMR" id="B0UU01"/>
<dbReference type="STRING" id="228400.HSM_1278"/>
<dbReference type="GeneID" id="31487580"/>
<dbReference type="KEGG" id="hsm:HSM_1278"/>
<dbReference type="HOGENOM" id="CLU_030571_4_1_6"/>
<dbReference type="UniPathway" id="UPA00619">
    <property type="reaction ID" value="UER00676"/>
</dbReference>
<dbReference type="GO" id="GO:0004416">
    <property type="term" value="F:hydroxyacylglutathione hydrolase activity"/>
    <property type="evidence" value="ECO:0007669"/>
    <property type="project" value="UniProtKB-UniRule"/>
</dbReference>
<dbReference type="GO" id="GO:0046872">
    <property type="term" value="F:metal ion binding"/>
    <property type="evidence" value="ECO:0007669"/>
    <property type="project" value="UniProtKB-KW"/>
</dbReference>
<dbReference type="GO" id="GO:0019243">
    <property type="term" value="P:methylglyoxal catabolic process to D-lactate via S-lactoyl-glutathione"/>
    <property type="evidence" value="ECO:0007669"/>
    <property type="project" value="InterPro"/>
</dbReference>
<dbReference type="CDD" id="cd07723">
    <property type="entry name" value="hydroxyacylglutathione_hydrolase_MBL-fold"/>
    <property type="match status" value="1"/>
</dbReference>
<dbReference type="Gene3D" id="3.60.15.10">
    <property type="entry name" value="Ribonuclease Z/Hydroxyacylglutathione hydrolase-like"/>
    <property type="match status" value="1"/>
</dbReference>
<dbReference type="HAMAP" id="MF_01374">
    <property type="entry name" value="Glyoxalase_2"/>
    <property type="match status" value="1"/>
</dbReference>
<dbReference type="InterPro" id="IPR035680">
    <property type="entry name" value="Clx_II_MBL"/>
</dbReference>
<dbReference type="InterPro" id="IPR050110">
    <property type="entry name" value="Glyoxalase_II_hydrolase"/>
</dbReference>
<dbReference type="InterPro" id="IPR032282">
    <property type="entry name" value="HAGH_C"/>
</dbReference>
<dbReference type="InterPro" id="IPR017782">
    <property type="entry name" value="Hydroxyacylglutathione_Hdrlase"/>
</dbReference>
<dbReference type="InterPro" id="IPR001279">
    <property type="entry name" value="Metallo-B-lactamas"/>
</dbReference>
<dbReference type="InterPro" id="IPR036866">
    <property type="entry name" value="RibonucZ/Hydroxyglut_hydro"/>
</dbReference>
<dbReference type="NCBIfam" id="TIGR03413">
    <property type="entry name" value="GSH_gloB"/>
    <property type="match status" value="1"/>
</dbReference>
<dbReference type="PANTHER" id="PTHR43705">
    <property type="entry name" value="HYDROXYACYLGLUTATHIONE HYDROLASE"/>
    <property type="match status" value="1"/>
</dbReference>
<dbReference type="PANTHER" id="PTHR43705:SF1">
    <property type="entry name" value="HYDROXYACYLGLUTATHIONE HYDROLASE GLOB"/>
    <property type="match status" value="1"/>
</dbReference>
<dbReference type="Pfam" id="PF16123">
    <property type="entry name" value="HAGH_C"/>
    <property type="match status" value="1"/>
</dbReference>
<dbReference type="Pfam" id="PF00753">
    <property type="entry name" value="Lactamase_B"/>
    <property type="match status" value="1"/>
</dbReference>
<dbReference type="SMART" id="SM00849">
    <property type="entry name" value="Lactamase_B"/>
    <property type="match status" value="1"/>
</dbReference>
<dbReference type="SUPFAM" id="SSF56281">
    <property type="entry name" value="Metallo-hydrolase/oxidoreductase"/>
    <property type="match status" value="1"/>
</dbReference>
<gene>
    <name evidence="1" type="primary">gloB</name>
    <name type="ordered locus">HSM_1278</name>
</gene>
<comment type="function">
    <text evidence="1">Thiolesterase that catalyzes the hydrolysis of S-D-lactoyl-glutathione to form glutathione and D-lactic acid.</text>
</comment>
<comment type="catalytic activity">
    <reaction evidence="1">
        <text>an S-(2-hydroxyacyl)glutathione + H2O = a 2-hydroxy carboxylate + glutathione + H(+)</text>
        <dbReference type="Rhea" id="RHEA:21864"/>
        <dbReference type="ChEBI" id="CHEBI:15377"/>
        <dbReference type="ChEBI" id="CHEBI:15378"/>
        <dbReference type="ChEBI" id="CHEBI:57925"/>
        <dbReference type="ChEBI" id="CHEBI:58896"/>
        <dbReference type="ChEBI" id="CHEBI:71261"/>
        <dbReference type="EC" id="3.1.2.6"/>
    </reaction>
</comment>
<comment type="cofactor">
    <cofactor evidence="1">
        <name>Zn(2+)</name>
        <dbReference type="ChEBI" id="CHEBI:29105"/>
    </cofactor>
    <text evidence="1">Binds 2 Zn(2+) ions per subunit.</text>
</comment>
<comment type="pathway">
    <text evidence="1">Secondary metabolite metabolism; methylglyoxal degradation; (R)-lactate from methylglyoxal: step 2/2.</text>
</comment>
<comment type="subunit">
    <text evidence="1">Monomer.</text>
</comment>
<comment type="similarity">
    <text evidence="1">Belongs to the metallo-beta-lactamase superfamily. Glyoxalase II family.</text>
</comment>
<protein>
    <recommendedName>
        <fullName evidence="1">Hydroxyacylglutathione hydrolase</fullName>
        <ecNumber evidence="1">3.1.2.6</ecNumber>
    </recommendedName>
    <alternativeName>
        <fullName evidence="1">Glyoxalase II</fullName>
        <shortName evidence="1">Glx II</shortName>
    </alternativeName>
</protein>
<organism>
    <name type="scientific">Histophilus somni (strain 2336)</name>
    <name type="common">Haemophilus somnus</name>
    <dbReference type="NCBI Taxonomy" id="228400"/>
    <lineage>
        <taxon>Bacteria</taxon>
        <taxon>Pseudomonadati</taxon>
        <taxon>Pseudomonadota</taxon>
        <taxon>Gammaproteobacteria</taxon>
        <taxon>Pasteurellales</taxon>
        <taxon>Pasteurellaceae</taxon>
        <taxon>Histophilus</taxon>
    </lineage>
</organism>
<reference key="1">
    <citation type="submission" date="2008-02" db="EMBL/GenBank/DDBJ databases">
        <title>Complete sequence of Haemophilus somnus 2336.</title>
        <authorList>
            <consortium name="US DOE Joint Genome Institute"/>
            <person name="Siddaramappa S."/>
            <person name="Duncan A.J."/>
            <person name="Challacombe J.F."/>
            <person name="Rainey D."/>
            <person name="Gillaspy A.F."/>
            <person name="Carson M."/>
            <person name="Gipson J."/>
            <person name="Gipson M."/>
            <person name="Bruce D."/>
            <person name="Detter J.C."/>
            <person name="Han C.S."/>
            <person name="Land M."/>
            <person name="Tapia R."/>
            <person name="Thompson L.S."/>
            <person name="Orvis J."/>
            <person name="Zaitshik J."/>
            <person name="Barnes G."/>
            <person name="Brettin T.S."/>
            <person name="Dyer D.W."/>
            <person name="Inzana T.J."/>
        </authorList>
    </citation>
    <scope>NUCLEOTIDE SEQUENCE [LARGE SCALE GENOMIC DNA]</scope>
    <source>
        <strain>2336</strain>
    </source>
</reference>
<feature type="chain" id="PRO_1000087281" description="Hydroxyacylglutathione hydrolase">
    <location>
        <begin position="1"/>
        <end position="233"/>
    </location>
</feature>
<feature type="binding site" evidence="1">
    <location>
        <position position="52"/>
    </location>
    <ligand>
        <name>Zn(2+)</name>
        <dbReference type="ChEBI" id="CHEBI:29105"/>
        <label>1</label>
    </ligand>
</feature>
<feature type="binding site" evidence="1">
    <location>
        <position position="54"/>
    </location>
    <ligand>
        <name>Zn(2+)</name>
        <dbReference type="ChEBI" id="CHEBI:29105"/>
        <label>1</label>
    </ligand>
</feature>
<feature type="binding site" evidence="1">
    <location>
        <position position="56"/>
    </location>
    <ligand>
        <name>Zn(2+)</name>
        <dbReference type="ChEBI" id="CHEBI:29105"/>
        <label>2</label>
    </ligand>
</feature>
<feature type="binding site" evidence="1">
    <location>
        <position position="57"/>
    </location>
    <ligand>
        <name>Zn(2+)</name>
        <dbReference type="ChEBI" id="CHEBI:29105"/>
        <label>2</label>
    </ligand>
</feature>
<feature type="binding site" evidence="1">
    <location>
        <position position="108"/>
    </location>
    <ligand>
        <name>Zn(2+)</name>
        <dbReference type="ChEBI" id="CHEBI:29105"/>
        <label>1</label>
    </ligand>
</feature>
<feature type="binding site" evidence="1">
    <location>
        <position position="125"/>
    </location>
    <ligand>
        <name>Zn(2+)</name>
        <dbReference type="ChEBI" id="CHEBI:29105"/>
        <label>1</label>
    </ligand>
</feature>
<feature type="binding site" evidence="1">
    <location>
        <position position="125"/>
    </location>
    <ligand>
        <name>Zn(2+)</name>
        <dbReference type="ChEBI" id="CHEBI:29105"/>
        <label>2</label>
    </ligand>
</feature>
<feature type="binding site" evidence="1">
    <location>
        <position position="163"/>
    </location>
    <ligand>
        <name>Zn(2+)</name>
        <dbReference type="ChEBI" id="CHEBI:29105"/>
        <label>2</label>
    </ligand>
</feature>
<keyword id="KW-0378">Hydrolase</keyword>
<keyword id="KW-0479">Metal-binding</keyword>
<keyword id="KW-0862">Zinc</keyword>
<proteinExistence type="inferred from homology"/>
<accession>B0UU01</accession>